<organism>
    <name type="scientific">Mycolicibacterium smegmatis (strain ATCC 700084 / mc(2)155)</name>
    <name type="common">Mycobacterium smegmatis</name>
    <dbReference type="NCBI Taxonomy" id="246196"/>
    <lineage>
        <taxon>Bacteria</taxon>
        <taxon>Bacillati</taxon>
        <taxon>Actinomycetota</taxon>
        <taxon>Actinomycetes</taxon>
        <taxon>Mycobacteriales</taxon>
        <taxon>Mycobacteriaceae</taxon>
        <taxon>Mycolicibacterium</taxon>
    </lineage>
</organism>
<reference key="1">
    <citation type="submission" date="2006-10" db="EMBL/GenBank/DDBJ databases">
        <authorList>
            <person name="Fleischmann R.D."/>
            <person name="Dodson R.J."/>
            <person name="Haft D.H."/>
            <person name="Merkel J.S."/>
            <person name="Nelson W.C."/>
            <person name="Fraser C.M."/>
        </authorList>
    </citation>
    <scope>NUCLEOTIDE SEQUENCE [LARGE SCALE GENOMIC DNA]</scope>
    <source>
        <strain>ATCC 700084 / mc(2)155</strain>
    </source>
</reference>
<reference key="2">
    <citation type="journal article" date="2007" name="Genome Biol.">
        <title>Interrupted coding sequences in Mycobacterium smegmatis: authentic mutations or sequencing errors?</title>
        <authorList>
            <person name="Deshayes C."/>
            <person name="Perrodou E."/>
            <person name="Gallien S."/>
            <person name="Euphrasie D."/>
            <person name="Schaeffer C."/>
            <person name="Van-Dorsselaer A."/>
            <person name="Poch O."/>
            <person name="Lecompte O."/>
            <person name="Reyrat J.-M."/>
        </authorList>
    </citation>
    <scope>NUCLEOTIDE SEQUENCE [LARGE SCALE GENOMIC DNA]</scope>
    <source>
        <strain>ATCC 700084 / mc(2)155</strain>
    </source>
</reference>
<reference key="3">
    <citation type="journal article" date="2009" name="Genome Res.">
        <title>Ortho-proteogenomics: multiple proteomes investigation through orthology and a new MS-based protocol.</title>
        <authorList>
            <person name="Gallien S."/>
            <person name="Perrodou E."/>
            <person name="Carapito C."/>
            <person name="Deshayes C."/>
            <person name="Reyrat J.-M."/>
            <person name="Van Dorsselaer A."/>
            <person name="Poch O."/>
            <person name="Schaeffer C."/>
            <person name="Lecompte O."/>
        </authorList>
    </citation>
    <scope>NUCLEOTIDE SEQUENCE [LARGE SCALE GENOMIC DNA]</scope>
    <source>
        <strain>ATCC 700084 / mc(2)155</strain>
    </source>
</reference>
<reference key="4">
    <citation type="journal article" date="2010" name="Microbiology">
        <title>Cholesterol utilization in mycobacteria is controlled by two TetR-type transcriptional regulators: kstR and kstR2.</title>
        <authorList>
            <person name="Kendall S.L."/>
            <person name="Burgess P."/>
            <person name="Balhana R."/>
            <person name="Withers M."/>
            <person name="Ten Bokum A."/>
            <person name="Lott J.S."/>
            <person name="Gao C."/>
            <person name="Uhia-Castro I."/>
            <person name="Stoker N.G."/>
        </authorList>
    </citation>
    <scope>FUNCTION AS A TRANSCRIPTIONAL REPRESSOR</scope>
</reference>
<protein>
    <recommendedName>
        <fullName>HTH-type transcriptional repressor KstR2</fullName>
    </recommendedName>
</protein>
<comment type="function">
    <text evidence="3">Controls the expression of a small regulon that may play a role in the utilization of cholesterol.</text>
</comment>
<comment type="subunit">
    <text evidence="1">Homodimer.</text>
</comment>
<sequence length="205" mass="23306">MAPDTPSQPASRRDELLQLAATMFADRGLKATTVRDIADSAGILSGSLYHHFKSKEQMVEEVLRDFLDWLFGRYQQILDTATSPLEKLTGLFMASFEAIEHRHAQVVIYQDEAKRLSDLPQFDFVETRNKEQRKMWVDILQEGVADGSFRPDLDVDLVYRFIRDTTWVSVRWYKPGGPLSAEQVGQQYLAIVLGGITQSQGDKHA</sequence>
<accession>A0R4Z6</accession>
<accession>I7G9M3</accession>
<dbReference type="EMBL" id="CP000480">
    <property type="protein sequence ID" value="ABK75778.1"/>
    <property type="molecule type" value="Genomic_DNA"/>
</dbReference>
<dbReference type="EMBL" id="CP001663">
    <property type="protein sequence ID" value="AFP42282.1"/>
    <property type="molecule type" value="Genomic_DNA"/>
</dbReference>
<dbReference type="RefSeq" id="WP_003897410.1">
    <property type="nucleotide sequence ID" value="NZ_SIJM01000017.1"/>
</dbReference>
<dbReference type="RefSeq" id="YP_890234.1">
    <property type="nucleotide sequence ID" value="NC_008596.1"/>
</dbReference>
<dbReference type="SMR" id="A0R4Z6"/>
<dbReference type="STRING" id="246196.MSMEG_6009"/>
<dbReference type="PaxDb" id="246196-MSMEI_5849"/>
<dbReference type="GeneID" id="93460642"/>
<dbReference type="KEGG" id="msb:LJ00_29710"/>
<dbReference type="KEGG" id="msg:MSMEI_5849"/>
<dbReference type="KEGG" id="msm:MSMEG_6009"/>
<dbReference type="PATRIC" id="fig|246196.19.peg.5846"/>
<dbReference type="eggNOG" id="COG1309">
    <property type="taxonomic scope" value="Bacteria"/>
</dbReference>
<dbReference type="OrthoDB" id="9814200at2"/>
<dbReference type="Proteomes" id="UP000000757">
    <property type="component" value="Chromosome"/>
</dbReference>
<dbReference type="Proteomes" id="UP000006158">
    <property type="component" value="Chromosome"/>
</dbReference>
<dbReference type="GO" id="GO:0003677">
    <property type="term" value="F:DNA binding"/>
    <property type="evidence" value="ECO:0000315"/>
    <property type="project" value="UniProtKB"/>
</dbReference>
<dbReference type="GO" id="GO:0003700">
    <property type="term" value="F:DNA-binding transcription factor activity"/>
    <property type="evidence" value="ECO:0007669"/>
    <property type="project" value="TreeGrafter"/>
</dbReference>
<dbReference type="GO" id="GO:0000976">
    <property type="term" value="F:transcription cis-regulatory region binding"/>
    <property type="evidence" value="ECO:0007669"/>
    <property type="project" value="TreeGrafter"/>
</dbReference>
<dbReference type="GO" id="GO:0006355">
    <property type="term" value="P:regulation of DNA-templated transcription"/>
    <property type="evidence" value="ECO:0000315"/>
    <property type="project" value="UniProtKB"/>
</dbReference>
<dbReference type="FunFam" id="1.10.10.60:FF:000289">
    <property type="entry name" value="TetR family transcriptional regulator"/>
    <property type="match status" value="1"/>
</dbReference>
<dbReference type="FunFam" id="1.10.357.10:FF:000020">
    <property type="entry name" value="TetR family transcriptional regulator"/>
    <property type="match status" value="1"/>
</dbReference>
<dbReference type="Gene3D" id="1.10.10.60">
    <property type="entry name" value="Homeodomain-like"/>
    <property type="match status" value="1"/>
</dbReference>
<dbReference type="Gene3D" id="1.10.357.10">
    <property type="entry name" value="Tetracycline Repressor, domain 2"/>
    <property type="match status" value="1"/>
</dbReference>
<dbReference type="InterPro" id="IPR009057">
    <property type="entry name" value="Homeodomain-like_sf"/>
</dbReference>
<dbReference type="InterPro" id="IPR050109">
    <property type="entry name" value="HTH-type_TetR-like_transc_reg"/>
</dbReference>
<dbReference type="InterPro" id="IPR001647">
    <property type="entry name" value="HTH_TetR"/>
</dbReference>
<dbReference type="InterPro" id="IPR041490">
    <property type="entry name" value="KstR2_TetR_C"/>
</dbReference>
<dbReference type="InterPro" id="IPR036271">
    <property type="entry name" value="Tet_transcr_reg_TetR-rel_C_sf"/>
</dbReference>
<dbReference type="PANTHER" id="PTHR30055">
    <property type="entry name" value="HTH-TYPE TRANSCRIPTIONAL REGULATOR RUTR"/>
    <property type="match status" value="1"/>
</dbReference>
<dbReference type="PANTHER" id="PTHR30055:SF175">
    <property type="entry name" value="HTH-TYPE TRANSCRIPTIONAL REPRESSOR KSTR2"/>
    <property type="match status" value="1"/>
</dbReference>
<dbReference type="Pfam" id="PF17932">
    <property type="entry name" value="TetR_C_24"/>
    <property type="match status" value="1"/>
</dbReference>
<dbReference type="Pfam" id="PF00440">
    <property type="entry name" value="TetR_N"/>
    <property type="match status" value="1"/>
</dbReference>
<dbReference type="PRINTS" id="PR00455">
    <property type="entry name" value="HTHTETR"/>
</dbReference>
<dbReference type="SUPFAM" id="SSF46689">
    <property type="entry name" value="Homeodomain-like"/>
    <property type="match status" value="1"/>
</dbReference>
<dbReference type="SUPFAM" id="SSF48498">
    <property type="entry name" value="Tetracyclin repressor-like, C-terminal domain"/>
    <property type="match status" value="1"/>
</dbReference>
<dbReference type="PROSITE" id="PS50977">
    <property type="entry name" value="HTH_TETR_2"/>
    <property type="match status" value="1"/>
</dbReference>
<gene>
    <name type="primary">kstR2</name>
    <name type="ordered locus">MSMEG_6009</name>
    <name type="ordered locus">MSMEI_5849</name>
</gene>
<name>KSTR2_MYCS2</name>
<evidence type="ECO:0000250" key="1"/>
<evidence type="ECO:0000255" key="2">
    <source>
        <dbReference type="PROSITE-ProRule" id="PRU00335"/>
    </source>
</evidence>
<evidence type="ECO:0000269" key="3">
    <source>
    </source>
</evidence>
<keyword id="KW-0238">DNA-binding</keyword>
<keyword id="KW-1185">Reference proteome</keyword>
<keyword id="KW-0678">Repressor</keyword>
<keyword id="KW-0804">Transcription</keyword>
<keyword id="KW-0805">Transcription regulation</keyword>
<proteinExistence type="evidence at protein level"/>
<feature type="chain" id="PRO_0000405032" description="HTH-type transcriptional repressor KstR2">
    <location>
        <begin position="1"/>
        <end position="205"/>
    </location>
</feature>
<feature type="domain" description="HTH tetR-type" evidence="2">
    <location>
        <begin position="10"/>
        <end position="70"/>
    </location>
</feature>
<feature type="DNA-binding region" description="H-T-H motif" evidence="2">
    <location>
        <begin position="33"/>
        <end position="52"/>
    </location>
</feature>